<keyword id="KW-0002">3D-structure</keyword>
<keyword id="KW-1015">Disulfide bond</keyword>
<keyword id="KW-0249">Electron transport</keyword>
<keyword id="KW-1185">Reference proteome</keyword>
<keyword id="KW-0813">Transport</keyword>
<protein>
    <recommendedName>
        <fullName>Glutaredoxin-like protein C5orf63 homolog</fullName>
    </recommendedName>
</protein>
<reference key="1">
    <citation type="journal article" date="2005" name="Science">
        <title>The transcriptional landscape of the mammalian genome.</title>
        <authorList>
            <person name="Carninci P."/>
            <person name="Kasukawa T."/>
            <person name="Katayama S."/>
            <person name="Gough J."/>
            <person name="Frith M.C."/>
            <person name="Maeda N."/>
            <person name="Oyama R."/>
            <person name="Ravasi T."/>
            <person name="Lenhard B."/>
            <person name="Wells C."/>
            <person name="Kodzius R."/>
            <person name="Shimokawa K."/>
            <person name="Bajic V.B."/>
            <person name="Brenner S.E."/>
            <person name="Batalov S."/>
            <person name="Forrest A.R."/>
            <person name="Zavolan M."/>
            <person name="Davis M.J."/>
            <person name="Wilming L.G."/>
            <person name="Aidinis V."/>
            <person name="Allen J.E."/>
            <person name="Ambesi-Impiombato A."/>
            <person name="Apweiler R."/>
            <person name="Aturaliya R.N."/>
            <person name="Bailey T.L."/>
            <person name="Bansal M."/>
            <person name="Baxter L."/>
            <person name="Beisel K.W."/>
            <person name="Bersano T."/>
            <person name="Bono H."/>
            <person name="Chalk A.M."/>
            <person name="Chiu K.P."/>
            <person name="Choudhary V."/>
            <person name="Christoffels A."/>
            <person name="Clutterbuck D.R."/>
            <person name="Crowe M.L."/>
            <person name="Dalla E."/>
            <person name="Dalrymple B.P."/>
            <person name="de Bono B."/>
            <person name="Della Gatta G."/>
            <person name="di Bernardo D."/>
            <person name="Down T."/>
            <person name="Engstrom P."/>
            <person name="Fagiolini M."/>
            <person name="Faulkner G."/>
            <person name="Fletcher C.F."/>
            <person name="Fukushima T."/>
            <person name="Furuno M."/>
            <person name="Futaki S."/>
            <person name="Gariboldi M."/>
            <person name="Georgii-Hemming P."/>
            <person name="Gingeras T.R."/>
            <person name="Gojobori T."/>
            <person name="Green R.E."/>
            <person name="Gustincich S."/>
            <person name="Harbers M."/>
            <person name="Hayashi Y."/>
            <person name="Hensch T.K."/>
            <person name="Hirokawa N."/>
            <person name="Hill D."/>
            <person name="Huminiecki L."/>
            <person name="Iacono M."/>
            <person name="Ikeo K."/>
            <person name="Iwama A."/>
            <person name="Ishikawa T."/>
            <person name="Jakt M."/>
            <person name="Kanapin A."/>
            <person name="Katoh M."/>
            <person name="Kawasawa Y."/>
            <person name="Kelso J."/>
            <person name="Kitamura H."/>
            <person name="Kitano H."/>
            <person name="Kollias G."/>
            <person name="Krishnan S.P."/>
            <person name="Kruger A."/>
            <person name="Kummerfeld S.K."/>
            <person name="Kurochkin I.V."/>
            <person name="Lareau L.F."/>
            <person name="Lazarevic D."/>
            <person name="Lipovich L."/>
            <person name="Liu J."/>
            <person name="Liuni S."/>
            <person name="McWilliam S."/>
            <person name="Madan Babu M."/>
            <person name="Madera M."/>
            <person name="Marchionni L."/>
            <person name="Matsuda H."/>
            <person name="Matsuzawa S."/>
            <person name="Miki H."/>
            <person name="Mignone F."/>
            <person name="Miyake S."/>
            <person name="Morris K."/>
            <person name="Mottagui-Tabar S."/>
            <person name="Mulder N."/>
            <person name="Nakano N."/>
            <person name="Nakauchi H."/>
            <person name="Ng P."/>
            <person name="Nilsson R."/>
            <person name="Nishiguchi S."/>
            <person name="Nishikawa S."/>
            <person name="Nori F."/>
            <person name="Ohara O."/>
            <person name="Okazaki Y."/>
            <person name="Orlando V."/>
            <person name="Pang K.C."/>
            <person name="Pavan W.J."/>
            <person name="Pavesi G."/>
            <person name="Pesole G."/>
            <person name="Petrovsky N."/>
            <person name="Piazza S."/>
            <person name="Reed J."/>
            <person name="Reid J.F."/>
            <person name="Ring B.Z."/>
            <person name="Ringwald M."/>
            <person name="Rost B."/>
            <person name="Ruan Y."/>
            <person name="Salzberg S.L."/>
            <person name="Sandelin A."/>
            <person name="Schneider C."/>
            <person name="Schoenbach C."/>
            <person name="Sekiguchi K."/>
            <person name="Semple C.A."/>
            <person name="Seno S."/>
            <person name="Sessa L."/>
            <person name="Sheng Y."/>
            <person name="Shibata Y."/>
            <person name="Shimada H."/>
            <person name="Shimada K."/>
            <person name="Silva D."/>
            <person name="Sinclair B."/>
            <person name="Sperling S."/>
            <person name="Stupka E."/>
            <person name="Sugiura K."/>
            <person name="Sultana R."/>
            <person name="Takenaka Y."/>
            <person name="Taki K."/>
            <person name="Tammoja K."/>
            <person name="Tan S.L."/>
            <person name="Tang S."/>
            <person name="Taylor M.S."/>
            <person name="Tegner J."/>
            <person name="Teichmann S.A."/>
            <person name="Ueda H.R."/>
            <person name="van Nimwegen E."/>
            <person name="Verardo R."/>
            <person name="Wei C.L."/>
            <person name="Yagi K."/>
            <person name="Yamanishi H."/>
            <person name="Zabarovsky E."/>
            <person name="Zhu S."/>
            <person name="Zimmer A."/>
            <person name="Hide W."/>
            <person name="Bult C."/>
            <person name="Grimmond S.M."/>
            <person name="Teasdale R.D."/>
            <person name="Liu E.T."/>
            <person name="Brusic V."/>
            <person name="Quackenbush J."/>
            <person name="Wahlestedt C."/>
            <person name="Mattick J.S."/>
            <person name="Hume D.A."/>
            <person name="Kai C."/>
            <person name="Sasaki D."/>
            <person name="Tomaru Y."/>
            <person name="Fukuda S."/>
            <person name="Kanamori-Katayama M."/>
            <person name="Suzuki M."/>
            <person name="Aoki J."/>
            <person name="Arakawa T."/>
            <person name="Iida J."/>
            <person name="Imamura K."/>
            <person name="Itoh M."/>
            <person name="Kato T."/>
            <person name="Kawaji H."/>
            <person name="Kawagashira N."/>
            <person name="Kawashima T."/>
            <person name="Kojima M."/>
            <person name="Kondo S."/>
            <person name="Konno H."/>
            <person name="Nakano K."/>
            <person name="Ninomiya N."/>
            <person name="Nishio T."/>
            <person name="Okada M."/>
            <person name="Plessy C."/>
            <person name="Shibata K."/>
            <person name="Shiraki T."/>
            <person name="Suzuki S."/>
            <person name="Tagami M."/>
            <person name="Waki K."/>
            <person name="Watahiki A."/>
            <person name="Okamura-Oho Y."/>
            <person name="Suzuki H."/>
            <person name="Kawai J."/>
            <person name="Hayashizaki Y."/>
        </authorList>
    </citation>
    <scope>NUCLEOTIDE SEQUENCE [LARGE SCALE MRNA]</scope>
    <source>
        <strain>C57BL/6J</strain>
        <tissue>Corpora quadrigemina</tissue>
    </source>
</reference>
<reference key="2">
    <citation type="journal article" date="2010" name="Cell">
        <title>A tissue-specific atlas of mouse protein phosphorylation and expression.</title>
        <authorList>
            <person name="Huttlin E.L."/>
            <person name="Jedrychowski M.P."/>
            <person name="Elias J.E."/>
            <person name="Goswami T."/>
            <person name="Rad R."/>
            <person name="Beausoleil S.A."/>
            <person name="Villen J."/>
            <person name="Haas W."/>
            <person name="Sowa M.E."/>
            <person name="Gygi S.P."/>
        </authorList>
    </citation>
    <scope>IDENTIFICATION BY MASS SPECTROMETRY [LARGE SCALE ANALYSIS]</scope>
    <source>
        <tissue>Heart</tissue>
    </source>
</reference>
<reference key="3">
    <citation type="submission" date="2009-02" db="PDB data bank">
        <title>Solution structure of hypothetical protein C330018D20Rik from Mus musculus.</title>
        <authorList>
            <consortium name="RIKEN structural genomics initiative (RSGI)"/>
        </authorList>
    </citation>
    <scope>STRUCTURE BY NMR OF 21-107</scope>
</reference>
<organism>
    <name type="scientific">Mus musculus</name>
    <name type="common">Mouse</name>
    <dbReference type="NCBI Taxonomy" id="10090"/>
    <lineage>
        <taxon>Eukaryota</taxon>
        <taxon>Metazoa</taxon>
        <taxon>Chordata</taxon>
        <taxon>Craniata</taxon>
        <taxon>Vertebrata</taxon>
        <taxon>Euteleostomi</taxon>
        <taxon>Mammalia</taxon>
        <taxon>Eutheria</taxon>
        <taxon>Euarchontoglires</taxon>
        <taxon>Glires</taxon>
        <taxon>Rodentia</taxon>
        <taxon>Myomorpha</taxon>
        <taxon>Muroidea</taxon>
        <taxon>Muridae</taxon>
        <taxon>Murinae</taxon>
        <taxon>Mus</taxon>
        <taxon>Mus</taxon>
    </lineage>
</organism>
<dbReference type="EMBL" id="AK021208">
    <property type="protein sequence ID" value="BAB32329.1"/>
    <property type="molecule type" value="mRNA"/>
</dbReference>
<dbReference type="EMBL" id="AK140255">
    <property type="protein sequence ID" value="BAE24301.1"/>
    <property type="molecule type" value="mRNA"/>
</dbReference>
<dbReference type="CCDS" id="CCDS50293.1"/>
<dbReference type="RefSeq" id="NP_084185.1">
    <property type="nucleotide sequence ID" value="NM_029909.1"/>
</dbReference>
<dbReference type="RefSeq" id="XP_006526410.1">
    <property type="nucleotide sequence ID" value="XM_006526347.3"/>
</dbReference>
<dbReference type="RefSeq" id="XP_006526411.1">
    <property type="nucleotide sequence ID" value="XM_006526348.3"/>
</dbReference>
<dbReference type="RefSeq" id="XP_006526412.1">
    <property type="nucleotide sequence ID" value="XM_006526349.3"/>
</dbReference>
<dbReference type="RefSeq" id="XP_006526413.1">
    <property type="nucleotide sequence ID" value="XM_006526350.3"/>
</dbReference>
<dbReference type="RefSeq" id="XP_006526414.1">
    <property type="nucleotide sequence ID" value="XM_006526351.5"/>
</dbReference>
<dbReference type="PDB" id="1WJK">
    <property type="method" value="NMR"/>
    <property type="chains" value="A=21-107"/>
</dbReference>
<dbReference type="PDBsum" id="1WJK"/>
<dbReference type="SMR" id="Q9CWB7"/>
<dbReference type="FunCoup" id="Q9CWB7">
    <property type="interactions" value="444"/>
</dbReference>
<dbReference type="IntAct" id="Q9CWB7">
    <property type="interactions" value="1"/>
</dbReference>
<dbReference type="MINT" id="Q9CWB7"/>
<dbReference type="STRING" id="10090.ENSMUSP00000025488"/>
<dbReference type="PhosphoSitePlus" id="Q9CWB7"/>
<dbReference type="PaxDb" id="10090-ENSMUSP00000025488"/>
<dbReference type="PeptideAtlas" id="Q9CWB7"/>
<dbReference type="Pumba" id="Q9CWB7"/>
<dbReference type="Antibodypedia" id="76266">
    <property type="antibodies" value="5 antibodies from 5 providers"/>
</dbReference>
<dbReference type="Ensembl" id="ENSMUST00000025488.15">
    <property type="protein sequence ID" value="ENSMUSP00000025488.9"/>
    <property type="gene ID" value="ENSMUSG00000024592.16"/>
</dbReference>
<dbReference type="Ensembl" id="ENSMUST00000139243.9">
    <property type="protein sequence ID" value="ENSMUSP00000116181.3"/>
    <property type="gene ID" value="ENSMUSG00000024592.16"/>
</dbReference>
<dbReference type="GeneID" id="77422"/>
<dbReference type="KEGG" id="mmu:77422"/>
<dbReference type="UCSC" id="uc008eyx.2">
    <property type="organism name" value="mouse"/>
</dbReference>
<dbReference type="AGR" id="MGI:1924672"/>
<dbReference type="MGI" id="MGI:1924672">
    <property type="gene designation" value="C330018D20Rik"/>
</dbReference>
<dbReference type="VEuPathDB" id="HostDB:ENSMUSG00000024592"/>
<dbReference type="eggNOG" id="ENOG502S4BD">
    <property type="taxonomic scope" value="Eukaryota"/>
</dbReference>
<dbReference type="GeneTree" id="ENSGT00390000014940"/>
<dbReference type="HOGENOM" id="CLU_125054_0_1_1"/>
<dbReference type="InParanoid" id="Q9CWB7"/>
<dbReference type="OMA" id="WYERYQF"/>
<dbReference type="OrthoDB" id="429967at2759"/>
<dbReference type="PhylomeDB" id="Q9CWB7"/>
<dbReference type="BioGRID-ORCS" id="77422">
    <property type="hits" value="1 hit in 80 CRISPR screens"/>
</dbReference>
<dbReference type="EvolutionaryTrace" id="Q9CWB7"/>
<dbReference type="PRO" id="PR:Q9CWB7"/>
<dbReference type="Proteomes" id="UP000000589">
    <property type="component" value="Chromosome 18"/>
</dbReference>
<dbReference type="RNAct" id="Q9CWB7">
    <property type="molecule type" value="protein"/>
</dbReference>
<dbReference type="Bgee" id="ENSMUSG00000024592">
    <property type="expression patterns" value="Expressed in interventricular septum and 229 other cell types or tissues"/>
</dbReference>
<dbReference type="GO" id="GO:0005739">
    <property type="term" value="C:mitochondrion"/>
    <property type="evidence" value="ECO:0007005"/>
    <property type="project" value="MGI"/>
</dbReference>
<dbReference type="FunFam" id="3.40.30.10:FF:000628">
    <property type="entry name" value="Glutaredoxin-like protein C5orf63 homolog"/>
    <property type="match status" value="1"/>
</dbReference>
<dbReference type="Gene3D" id="3.40.30.10">
    <property type="entry name" value="Glutaredoxin"/>
    <property type="match status" value="1"/>
</dbReference>
<dbReference type="InterPro" id="IPR008554">
    <property type="entry name" value="Glutaredoxin-like"/>
</dbReference>
<dbReference type="InterPro" id="IPR052565">
    <property type="entry name" value="Glutaredoxin-like_YDR286C"/>
</dbReference>
<dbReference type="InterPro" id="IPR036249">
    <property type="entry name" value="Thioredoxin-like_sf"/>
</dbReference>
<dbReference type="PANTHER" id="PTHR33558">
    <property type="entry name" value="GLUTAREDOXIN-LIKE PROTEIN C5ORF63 HOMOLOG"/>
    <property type="match status" value="1"/>
</dbReference>
<dbReference type="PANTHER" id="PTHR33558:SF1">
    <property type="entry name" value="GLUTAREDOXIN-LIKE PROTEIN C5ORF63 HOMOLOG"/>
    <property type="match status" value="1"/>
</dbReference>
<dbReference type="Pfam" id="PF05768">
    <property type="entry name" value="Glrx-like"/>
    <property type="match status" value="1"/>
</dbReference>
<dbReference type="SUPFAM" id="SSF52833">
    <property type="entry name" value="Thioredoxin-like"/>
    <property type="match status" value="1"/>
</dbReference>
<name>YD286_MOUSE</name>
<comment type="similarity">
    <text evidence="2">Belongs to the glutaredoxin family. YDR286C subfamily.</text>
</comment>
<sequence>MLWFQGKSLQIAKSSFGLLRNLSASNRALPVLTLFTKAPCPLCDEAKEVLQPYKDRFILQEVDITLPENSTWYERYKFDIPVFHLNGQFLMMHRVNTSKLEKQLRKLEQQVLATN</sequence>
<accession>Q9CWB7</accession>
<feature type="chain" id="PRO_0000328757" description="Glutaredoxin-like protein C5orf63 homolog">
    <location>
        <begin position="1"/>
        <end position="115"/>
    </location>
</feature>
<feature type="disulfide bond" description="Redox-active" evidence="1">
    <location>
        <begin position="40"/>
        <end position="43"/>
    </location>
</feature>
<feature type="strand" evidence="3">
    <location>
        <begin position="31"/>
        <end position="36"/>
    </location>
</feature>
<feature type="helix" evidence="3">
    <location>
        <begin position="41"/>
        <end position="49"/>
    </location>
</feature>
<feature type="strand" evidence="3">
    <location>
        <begin position="54"/>
        <end position="63"/>
    </location>
</feature>
<feature type="helix" evidence="3">
    <location>
        <begin position="70"/>
        <end position="75"/>
    </location>
</feature>
<feature type="strand" evidence="3">
    <location>
        <begin position="76"/>
        <end position="79"/>
    </location>
</feature>
<feature type="strand" evidence="3">
    <location>
        <begin position="81"/>
        <end position="94"/>
    </location>
</feature>
<feature type="helix" evidence="3">
    <location>
        <begin position="97"/>
        <end position="105"/>
    </location>
</feature>
<proteinExistence type="evidence at protein level"/>
<evidence type="ECO:0000250" key="1"/>
<evidence type="ECO:0000305" key="2"/>
<evidence type="ECO:0007829" key="3">
    <source>
        <dbReference type="PDB" id="1WJK"/>
    </source>
</evidence>